<name>DEOB_STAA8</name>
<evidence type="ECO:0000255" key="1">
    <source>
        <dbReference type="HAMAP-Rule" id="MF_00740"/>
    </source>
</evidence>
<gene>
    <name evidence="1" type="primary">deoB</name>
    <name type="ordered locus">SAOUHSC_00101</name>
</gene>
<organism>
    <name type="scientific">Staphylococcus aureus (strain NCTC 8325 / PS 47)</name>
    <dbReference type="NCBI Taxonomy" id="93061"/>
    <lineage>
        <taxon>Bacteria</taxon>
        <taxon>Bacillati</taxon>
        <taxon>Bacillota</taxon>
        <taxon>Bacilli</taxon>
        <taxon>Bacillales</taxon>
        <taxon>Staphylococcaceae</taxon>
        <taxon>Staphylococcus</taxon>
    </lineage>
</organism>
<protein>
    <recommendedName>
        <fullName evidence="1">Phosphopentomutase</fullName>
        <ecNumber evidence="1">5.4.2.7</ecNumber>
    </recommendedName>
    <alternativeName>
        <fullName evidence="1">Phosphodeoxyribomutase</fullName>
    </alternativeName>
</protein>
<reference key="1">
    <citation type="book" date="2006" name="Gram positive pathogens, 2nd edition">
        <title>The Staphylococcus aureus NCTC 8325 genome.</title>
        <editorList>
            <person name="Fischetti V."/>
            <person name="Novick R."/>
            <person name="Ferretti J."/>
            <person name="Portnoy D."/>
            <person name="Rood J."/>
        </editorList>
        <authorList>
            <person name="Gillaspy A.F."/>
            <person name="Worrell V."/>
            <person name="Orvis J."/>
            <person name="Roe B.A."/>
            <person name="Dyer D.W."/>
            <person name="Iandolo J.J."/>
        </authorList>
    </citation>
    <scope>NUCLEOTIDE SEQUENCE [LARGE SCALE GENOMIC DNA]</scope>
    <source>
        <strain>NCTC 8325 / PS 47</strain>
    </source>
</reference>
<proteinExistence type="inferred from homology"/>
<dbReference type="EC" id="5.4.2.7" evidence="1"/>
<dbReference type="EMBL" id="CP000253">
    <property type="protein sequence ID" value="ABD29282.1"/>
    <property type="molecule type" value="Genomic_DNA"/>
</dbReference>
<dbReference type="RefSeq" id="WP_000197806.1">
    <property type="nucleotide sequence ID" value="NZ_LS483365.1"/>
</dbReference>
<dbReference type="RefSeq" id="YP_498701.1">
    <property type="nucleotide sequence ID" value="NC_007795.1"/>
</dbReference>
<dbReference type="SMR" id="Q2G227"/>
<dbReference type="STRING" id="93061.SAOUHSC_00101"/>
<dbReference type="PaxDb" id="1280-SAXN108_0125"/>
<dbReference type="GeneID" id="3919810"/>
<dbReference type="KEGG" id="sao:SAOUHSC_00101"/>
<dbReference type="PATRIC" id="fig|93061.5.peg.90"/>
<dbReference type="eggNOG" id="COG1015">
    <property type="taxonomic scope" value="Bacteria"/>
</dbReference>
<dbReference type="HOGENOM" id="CLU_053861_0_0_9"/>
<dbReference type="OrthoDB" id="9769930at2"/>
<dbReference type="UniPathway" id="UPA00002">
    <property type="reaction ID" value="UER00467"/>
</dbReference>
<dbReference type="PRO" id="PR:Q2G227"/>
<dbReference type="Proteomes" id="UP000008816">
    <property type="component" value="Chromosome"/>
</dbReference>
<dbReference type="GO" id="GO:0005829">
    <property type="term" value="C:cytosol"/>
    <property type="evidence" value="ECO:0000318"/>
    <property type="project" value="GO_Central"/>
</dbReference>
<dbReference type="GO" id="GO:0000287">
    <property type="term" value="F:magnesium ion binding"/>
    <property type="evidence" value="ECO:0007669"/>
    <property type="project" value="InterPro"/>
</dbReference>
<dbReference type="GO" id="GO:0030145">
    <property type="term" value="F:manganese ion binding"/>
    <property type="evidence" value="ECO:0007669"/>
    <property type="project" value="UniProtKB-UniRule"/>
</dbReference>
<dbReference type="GO" id="GO:0008973">
    <property type="term" value="F:phosphopentomutase activity"/>
    <property type="evidence" value="ECO:0000318"/>
    <property type="project" value="GO_Central"/>
</dbReference>
<dbReference type="GO" id="GO:0006018">
    <property type="term" value="P:2-deoxyribose 1-phosphate catabolic process"/>
    <property type="evidence" value="ECO:0007669"/>
    <property type="project" value="UniProtKB-UniRule"/>
</dbReference>
<dbReference type="GO" id="GO:0006015">
    <property type="term" value="P:5-phosphoribose 1-diphosphate biosynthetic process"/>
    <property type="evidence" value="ECO:0007669"/>
    <property type="project" value="UniProtKB-UniPathway"/>
</dbReference>
<dbReference type="GO" id="GO:0043094">
    <property type="term" value="P:metabolic compound salvage"/>
    <property type="evidence" value="ECO:0007669"/>
    <property type="project" value="InterPro"/>
</dbReference>
<dbReference type="GO" id="GO:0009117">
    <property type="term" value="P:nucleotide metabolic process"/>
    <property type="evidence" value="ECO:0007669"/>
    <property type="project" value="InterPro"/>
</dbReference>
<dbReference type="CDD" id="cd16009">
    <property type="entry name" value="PPM"/>
    <property type="match status" value="1"/>
</dbReference>
<dbReference type="FunFam" id="3.30.70.1250:FF:000001">
    <property type="entry name" value="Phosphopentomutase"/>
    <property type="match status" value="1"/>
</dbReference>
<dbReference type="Gene3D" id="3.40.720.10">
    <property type="entry name" value="Alkaline Phosphatase, subunit A"/>
    <property type="match status" value="1"/>
</dbReference>
<dbReference type="Gene3D" id="3.30.70.1250">
    <property type="entry name" value="Phosphopentomutase"/>
    <property type="match status" value="1"/>
</dbReference>
<dbReference type="HAMAP" id="MF_00740">
    <property type="entry name" value="Phosphopentomut"/>
    <property type="match status" value="1"/>
</dbReference>
<dbReference type="InterPro" id="IPR017850">
    <property type="entry name" value="Alkaline_phosphatase_core_sf"/>
</dbReference>
<dbReference type="InterPro" id="IPR010045">
    <property type="entry name" value="DeoB"/>
</dbReference>
<dbReference type="InterPro" id="IPR006124">
    <property type="entry name" value="Metalloenzyme"/>
</dbReference>
<dbReference type="InterPro" id="IPR024052">
    <property type="entry name" value="Phosphopentomutase_DeoB_cap_sf"/>
</dbReference>
<dbReference type="NCBIfam" id="TIGR01696">
    <property type="entry name" value="deoB"/>
    <property type="match status" value="1"/>
</dbReference>
<dbReference type="NCBIfam" id="NF003766">
    <property type="entry name" value="PRK05362.1"/>
    <property type="match status" value="1"/>
</dbReference>
<dbReference type="PANTHER" id="PTHR21110">
    <property type="entry name" value="PHOSPHOPENTOMUTASE"/>
    <property type="match status" value="1"/>
</dbReference>
<dbReference type="PANTHER" id="PTHR21110:SF0">
    <property type="entry name" value="PHOSPHOPENTOMUTASE"/>
    <property type="match status" value="1"/>
</dbReference>
<dbReference type="Pfam" id="PF01676">
    <property type="entry name" value="Metalloenzyme"/>
    <property type="match status" value="1"/>
</dbReference>
<dbReference type="PIRSF" id="PIRSF001491">
    <property type="entry name" value="Ppentomutase"/>
    <property type="match status" value="1"/>
</dbReference>
<dbReference type="SUPFAM" id="SSF53649">
    <property type="entry name" value="Alkaline phosphatase-like"/>
    <property type="match status" value="1"/>
</dbReference>
<dbReference type="SUPFAM" id="SSF143856">
    <property type="entry name" value="DeoB insert domain-like"/>
    <property type="match status" value="1"/>
</dbReference>
<comment type="function">
    <text evidence="1">Isomerase that catalyzes the conversion of deoxy-ribose 1-phosphate (dRib-1-P) and ribose 1-phosphate (Rib-1-P) to deoxy-ribose 5-phosphate (dRib-5-P) and ribose 5-phosphate (Rib-5-P), respectively.</text>
</comment>
<comment type="catalytic activity">
    <reaction evidence="1">
        <text>2-deoxy-alpha-D-ribose 1-phosphate = 2-deoxy-D-ribose 5-phosphate</text>
        <dbReference type="Rhea" id="RHEA:27658"/>
        <dbReference type="ChEBI" id="CHEBI:57259"/>
        <dbReference type="ChEBI" id="CHEBI:62877"/>
        <dbReference type="EC" id="5.4.2.7"/>
    </reaction>
</comment>
<comment type="catalytic activity">
    <reaction evidence="1">
        <text>alpha-D-ribose 1-phosphate = D-ribose 5-phosphate</text>
        <dbReference type="Rhea" id="RHEA:18793"/>
        <dbReference type="ChEBI" id="CHEBI:57720"/>
        <dbReference type="ChEBI" id="CHEBI:78346"/>
        <dbReference type="EC" id="5.4.2.7"/>
    </reaction>
</comment>
<comment type="cofactor">
    <cofactor evidence="1">
        <name>Mn(2+)</name>
        <dbReference type="ChEBI" id="CHEBI:29035"/>
    </cofactor>
    <text evidence="1">Binds 2 manganese ions.</text>
</comment>
<comment type="pathway">
    <text evidence="1">Carbohydrate degradation; 2-deoxy-D-ribose 1-phosphate degradation; D-glyceraldehyde 3-phosphate and acetaldehyde from 2-deoxy-alpha-D-ribose 1-phosphate: step 1/2.</text>
</comment>
<comment type="subcellular location">
    <subcellularLocation>
        <location evidence="1">Cytoplasm</location>
    </subcellularLocation>
</comment>
<comment type="similarity">
    <text evidence="1">Belongs to the phosphopentomutase family.</text>
</comment>
<feature type="chain" id="PRO_0000258308" description="Phosphopentomutase">
    <location>
        <begin position="1"/>
        <end position="392"/>
    </location>
</feature>
<feature type="binding site" evidence="1">
    <location>
        <position position="14"/>
    </location>
    <ligand>
        <name>Mn(2+)</name>
        <dbReference type="ChEBI" id="CHEBI:29035"/>
        <label>1</label>
    </ligand>
</feature>
<feature type="binding site" evidence="1">
    <location>
        <position position="286"/>
    </location>
    <ligand>
        <name>Mn(2+)</name>
        <dbReference type="ChEBI" id="CHEBI:29035"/>
        <label>2</label>
    </ligand>
</feature>
<feature type="binding site" evidence="1">
    <location>
        <position position="291"/>
    </location>
    <ligand>
        <name>Mn(2+)</name>
        <dbReference type="ChEBI" id="CHEBI:29035"/>
        <label>2</label>
    </ligand>
</feature>
<feature type="binding site" evidence="1">
    <location>
        <position position="327"/>
    </location>
    <ligand>
        <name>Mn(2+)</name>
        <dbReference type="ChEBI" id="CHEBI:29035"/>
        <label>1</label>
    </ligand>
</feature>
<feature type="binding site" evidence="1">
    <location>
        <position position="328"/>
    </location>
    <ligand>
        <name>Mn(2+)</name>
        <dbReference type="ChEBI" id="CHEBI:29035"/>
        <label>1</label>
    </ligand>
</feature>
<feature type="binding site" evidence="1">
    <location>
        <position position="339"/>
    </location>
    <ligand>
        <name>Mn(2+)</name>
        <dbReference type="ChEBI" id="CHEBI:29035"/>
        <label>2</label>
    </ligand>
</feature>
<sequence>MTRPFNRVHLIVMDSVGIGEAPDAADFKDEGSHTLRHTLEGFDQTLPNLEKLGLGNIDKLPVVNAVEQPEAYYTKLSEASVGKDTMTGHWEIMGLNIMQPFKVYPNGFPEELIQQIEEMTGRKVVANKPASGTQIIDEWGEHQMKTGDLIVYTSADPVLQIAAHEDIIPLEELYDICEKVRELTKDPKYLIGRIIARPYVGEPGNFTRTSNRHDYALKPFGKTVLDHLKDGGYDVIAIGKINDIYDGEGVTEAVRTKSNMDGMDQLMKIVKKDFTGISFLNLVDFDALYGHRRDKPGYAQAIKDFDDRLPELFSNLKEDDLVIITADHGNDPTAPGTDHTREYIPVIMYSPKFKGGHALESDTTFSSIGATIADNFNVTLPEFGKSYLKELK</sequence>
<accession>Q2G227</accession>
<keyword id="KW-0963">Cytoplasm</keyword>
<keyword id="KW-0413">Isomerase</keyword>
<keyword id="KW-0464">Manganese</keyword>
<keyword id="KW-0479">Metal-binding</keyword>
<keyword id="KW-1185">Reference proteome</keyword>